<dbReference type="EC" id="2.1.3.15" evidence="1"/>
<dbReference type="EMBL" id="CP000869">
    <property type="protein sequence ID" value="ABX18297.1"/>
    <property type="molecule type" value="Genomic_DNA"/>
</dbReference>
<dbReference type="EMBL" id="AP009386">
    <property type="protein sequence ID" value="BAG45752.1"/>
    <property type="molecule type" value="Genomic_DNA"/>
</dbReference>
<dbReference type="RefSeq" id="WP_006399590.1">
    <property type="nucleotide sequence ID" value="NC_010805.1"/>
</dbReference>
<dbReference type="SMR" id="A9AMA4"/>
<dbReference type="STRING" id="395019.BMULJ_03892"/>
<dbReference type="GeneID" id="89567186"/>
<dbReference type="KEGG" id="bmj:BMULJ_03892"/>
<dbReference type="KEGG" id="bmu:Bmul_4619"/>
<dbReference type="eggNOG" id="COG0777">
    <property type="taxonomic scope" value="Bacteria"/>
</dbReference>
<dbReference type="HOGENOM" id="CLU_015486_1_0_4"/>
<dbReference type="UniPathway" id="UPA00655">
    <property type="reaction ID" value="UER00711"/>
</dbReference>
<dbReference type="Proteomes" id="UP000008815">
    <property type="component" value="Chromosome 2"/>
</dbReference>
<dbReference type="GO" id="GO:0009329">
    <property type="term" value="C:acetate CoA-transferase complex"/>
    <property type="evidence" value="ECO:0007669"/>
    <property type="project" value="TreeGrafter"/>
</dbReference>
<dbReference type="GO" id="GO:0003989">
    <property type="term" value="F:acetyl-CoA carboxylase activity"/>
    <property type="evidence" value="ECO:0007669"/>
    <property type="project" value="InterPro"/>
</dbReference>
<dbReference type="GO" id="GO:0005524">
    <property type="term" value="F:ATP binding"/>
    <property type="evidence" value="ECO:0007669"/>
    <property type="project" value="UniProtKB-KW"/>
</dbReference>
<dbReference type="GO" id="GO:0016743">
    <property type="term" value="F:carboxyl- or carbamoyltransferase activity"/>
    <property type="evidence" value="ECO:0007669"/>
    <property type="project" value="UniProtKB-UniRule"/>
</dbReference>
<dbReference type="GO" id="GO:0008270">
    <property type="term" value="F:zinc ion binding"/>
    <property type="evidence" value="ECO:0007669"/>
    <property type="project" value="UniProtKB-UniRule"/>
</dbReference>
<dbReference type="GO" id="GO:0006633">
    <property type="term" value="P:fatty acid biosynthetic process"/>
    <property type="evidence" value="ECO:0007669"/>
    <property type="project" value="UniProtKB-KW"/>
</dbReference>
<dbReference type="GO" id="GO:2001295">
    <property type="term" value="P:malonyl-CoA biosynthetic process"/>
    <property type="evidence" value="ECO:0007669"/>
    <property type="project" value="UniProtKB-UniRule"/>
</dbReference>
<dbReference type="Gene3D" id="3.90.226.10">
    <property type="entry name" value="2-enoyl-CoA Hydratase, Chain A, domain 1"/>
    <property type="match status" value="1"/>
</dbReference>
<dbReference type="HAMAP" id="MF_01395">
    <property type="entry name" value="AcetylCoA_CT_beta"/>
    <property type="match status" value="1"/>
</dbReference>
<dbReference type="InterPro" id="IPR034733">
    <property type="entry name" value="AcCoA_carboxyl_beta"/>
</dbReference>
<dbReference type="InterPro" id="IPR000438">
    <property type="entry name" value="Acetyl_CoA_COase_Trfase_b_su"/>
</dbReference>
<dbReference type="InterPro" id="IPR029045">
    <property type="entry name" value="ClpP/crotonase-like_dom_sf"/>
</dbReference>
<dbReference type="InterPro" id="IPR011762">
    <property type="entry name" value="COA_CT_N"/>
</dbReference>
<dbReference type="InterPro" id="IPR041010">
    <property type="entry name" value="Znf-ACC"/>
</dbReference>
<dbReference type="NCBIfam" id="TIGR00515">
    <property type="entry name" value="accD"/>
    <property type="match status" value="1"/>
</dbReference>
<dbReference type="PANTHER" id="PTHR42995">
    <property type="entry name" value="ACETYL-COENZYME A CARBOXYLASE CARBOXYL TRANSFERASE SUBUNIT BETA, CHLOROPLASTIC"/>
    <property type="match status" value="1"/>
</dbReference>
<dbReference type="PANTHER" id="PTHR42995:SF5">
    <property type="entry name" value="ACETYL-COENZYME A CARBOXYLASE CARBOXYL TRANSFERASE SUBUNIT BETA, CHLOROPLASTIC"/>
    <property type="match status" value="1"/>
</dbReference>
<dbReference type="Pfam" id="PF01039">
    <property type="entry name" value="Carboxyl_trans"/>
    <property type="match status" value="1"/>
</dbReference>
<dbReference type="Pfam" id="PF17848">
    <property type="entry name" value="Zn_ribbon_ACC"/>
    <property type="match status" value="1"/>
</dbReference>
<dbReference type="PRINTS" id="PR01070">
    <property type="entry name" value="ACCCTRFRASEB"/>
</dbReference>
<dbReference type="SUPFAM" id="SSF52096">
    <property type="entry name" value="ClpP/crotonase"/>
    <property type="match status" value="1"/>
</dbReference>
<dbReference type="PROSITE" id="PS50980">
    <property type="entry name" value="COA_CT_NTER"/>
    <property type="match status" value="1"/>
</dbReference>
<accession>A9AMA4</accession>
<gene>
    <name evidence="1" type="primary">accD</name>
    <name type="ordered locus">Bmul_4619</name>
    <name type="ordered locus">BMULJ_03892</name>
</gene>
<keyword id="KW-0067">ATP-binding</keyword>
<keyword id="KW-0963">Cytoplasm</keyword>
<keyword id="KW-0275">Fatty acid biosynthesis</keyword>
<keyword id="KW-0276">Fatty acid metabolism</keyword>
<keyword id="KW-0444">Lipid biosynthesis</keyword>
<keyword id="KW-0443">Lipid metabolism</keyword>
<keyword id="KW-0479">Metal-binding</keyword>
<keyword id="KW-0547">Nucleotide-binding</keyword>
<keyword id="KW-1185">Reference proteome</keyword>
<keyword id="KW-0808">Transferase</keyword>
<keyword id="KW-0862">Zinc</keyword>
<keyword id="KW-0863">Zinc-finger</keyword>
<comment type="function">
    <text evidence="1">Component of the acetyl coenzyme A carboxylase (ACC) complex. Biotin carboxylase (BC) catalyzes the carboxylation of biotin on its carrier protein (BCCP) and then the CO(2) group is transferred by the transcarboxylase to acetyl-CoA to form malonyl-CoA.</text>
</comment>
<comment type="catalytic activity">
    <reaction evidence="1">
        <text>N(6)-carboxybiotinyl-L-lysyl-[protein] + acetyl-CoA = N(6)-biotinyl-L-lysyl-[protein] + malonyl-CoA</text>
        <dbReference type="Rhea" id="RHEA:54728"/>
        <dbReference type="Rhea" id="RHEA-COMP:10505"/>
        <dbReference type="Rhea" id="RHEA-COMP:10506"/>
        <dbReference type="ChEBI" id="CHEBI:57288"/>
        <dbReference type="ChEBI" id="CHEBI:57384"/>
        <dbReference type="ChEBI" id="CHEBI:83144"/>
        <dbReference type="ChEBI" id="CHEBI:83145"/>
        <dbReference type="EC" id="2.1.3.15"/>
    </reaction>
</comment>
<comment type="cofactor">
    <cofactor evidence="1">
        <name>Zn(2+)</name>
        <dbReference type="ChEBI" id="CHEBI:29105"/>
    </cofactor>
    <text evidence="1">Binds 1 zinc ion per subunit.</text>
</comment>
<comment type="pathway">
    <text evidence="1">Lipid metabolism; malonyl-CoA biosynthesis; malonyl-CoA from acetyl-CoA: step 1/1.</text>
</comment>
<comment type="subunit">
    <text evidence="1">Acetyl-CoA carboxylase is a heterohexamer composed of biotin carboxyl carrier protein (AccB), biotin carboxylase (AccC) and two subunits each of ACCase subunit alpha (AccA) and ACCase subunit beta (AccD).</text>
</comment>
<comment type="subcellular location">
    <subcellularLocation>
        <location evidence="1">Cytoplasm</location>
    </subcellularLocation>
</comment>
<comment type="similarity">
    <text evidence="1">Belongs to the AccD/PCCB family.</text>
</comment>
<reference key="1">
    <citation type="submission" date="2007-10" db="EMBL/GenBank/DDBJ databases">
        <title>Complete sequence of chromosome 2 of Burkholderia multivorans ATCC 17616.</title>
        <authorList>
            <person name="Copeland A."/>
            <person name="Lucas S."/>
            <person name="Lapidus A."/>
            <person name="Barry K."/>
            <person name="Glavina del Rio T."/>
            <person name="Dalin E."/>
            <person name="Tice H."/>
            <person name="Pitluck S."/>
            <person name="Chain P."/>
            <person name="Malfatti S."/>
            <person name="Shin M."/>
            <person name="Vergez L."/>
            <person name="Schmutz J."/>
            <person name="Larimer F."/>
            <person name="Land M."/>
            <person name="Hauser L."/>
            <person name="Kyrpides N."/>
            <person name="Kim E."/>
            <person name="Tiedje J."/>
            <person name="Richardson P."/>
        </authorList>
    </citation>
    <scope>NUCLEOTIDE SEQUENCE [LARGE SCALE GENOMIC DNA]</scope>
    <source>
        <strain>ATCC 17616 / 249</strain>
    </source>
</reference>
<reference key="2">
    <citation type="submission" date="2007-04" db="EMBL/GenBank/DDBJ databases">
        <title>Complete genome sequence of Burkholderia multivorans ATCC 17616.</title>
        <authorList>
            <person name="Ohtsubo Y."/>
            <person name="Yamashita A."/>
            <person name="Kurokawa K."/>
            <person name="Takami H."/>
            <person name="Yuhara S."/>
            <person name="Nishiyama E."/>
            <person name="Endo R."/>
            <person name="Miyazaki R."/>
            <person name="Ono A."/>
            <person name="Yano K."/>
            <person name="Ito M."/>
            <person name="Sota M."/>
            <person name="Yuji N."/>
            <person name="Hattori M."/>
            <person name="Tsuda M."/>
        </authorList>
    </citation>
    <scope>NUCLEOTIDE SEQUENCE [LARGE SCALE GENOMIC DNA]</scope>
    <source>
        <strain>ATCC 17616 / 249</strain>
    </source>
</reference>
<proteinExistence type="inferred from homology"/>
<feature type="chain" id="PRO_0000358960" description="Acetyl-coenzyme A carboxylase carboxyl transferase subunit beta">
    <location>
        <begin position="1"/>
        <end position="290"/>
    </location>
</feature>
<feature type="domain" description="CoA carboxyltransferase N-terminal" evidence="2">
    <location>
        <begin position="27"/>
        <end position="290"/>
    </location>
</feature>
<feature type="zinc finger region" description="C4-type" evidence="1">
    <location>
        <begin position="31"/>
        <end position="53"/>
    </location>
</feature>
<feature type="binding site" evidence="1">
    <location>
        <position position="31"/>
    </location>
    <ligand>
        <name>Zn(2+)</name>
        <dbReference type="ChEBI" id="CHEBI:29105"/>
    </ligand>
</feature>
<feature type="binding site" evidence="1">
    <location>
        <position position="34"/>
    </location>
    <ligand>
        <name>Zn(2+)</name>
        <dbReference type="ChEBI" id="CHEBI:29105"/>
    </ligand>
</feature>
<feature type="binding site" evidence="1">
    <location>
        <position position="50"/>
    </location>
    <ligand>
        <name>Zn(2+)</name>
        <dbReference type="ChEBI" id="CHEBI:29105"/>
    </ligand>
</feature>
<feature type="binding site" evidence="1">
    <location>
        <position position="53"/>
    </location>
    <ligand>
        <name>Zn(2+)</name>
        <dbReference type="ChEBI" id="CHEBI:29105"/>
    </ligand>
</feature>
<sequence>MSWLDKLLPPKIKQTDPKSRKGIPEGLWVKCPSCEAVLYRNDVDANLHVCPKCDHHMRIGARERLDALLDPEGRYEIGQEIVPVDSLKFKDSRKYPDRLKEAMDETGETDAMVVMGGAIHTLPVVAACFEFSFMGGSMGSVVGERFARGAQNALEQHVPFICFTASGGARMQESLLSLMQMAKTTAMLTKLSEAKLPFISVLTDPTMGGVSASFAFLGDVVIAEPKALIGFAGPRVIEQTVREKLPEGFQRAEFLLKTGAIDMIVDRRKMRDEIAQLLALLQRQPADALA</sequence>
<organism>
    <name type="scientific">Burkholderia multivorans (strain ATCC 17616 / 249)</name>
    <dbReference type="NCBI Taxonomy" id="395019"/>
    <lineage>
        <taxon>Bacteria</taxon>
        <taxon>Pseudomonadati</taxon>
        <taxon>Pseudomonadota</taxon>
        <taxon>Betaproteobacteria</taxon>
        <taxon>Burkholderiales</taxon>
        <taxon>Burkholderiaceae</taxon>
        <taxon>Burkholderia</taxon>
        <taxon>Burkholderia cepacia complex</taxon>
    </lineage>
</organism>
<protein>
    <recommendedName>
        <fullName evidence="1">Acetyl-coenzyme A carboxylase carboxyl transferase subunit beta</fullName>
        <shortName evidence="1">ACCase subunit beta</shortName>
        <shortName evidence="1">Acetyl-CoA carboxylase carboxyltransferase subunit beta</shortName>
        <ecNumber evidence="1">2.1.3.15</ecNumber>
    </recommendedName>
</protein>
<name>ACCD_BURM1</name>
<evidence type="ECO:0000255" key="1">
    <source>
        <dbReference type="HAMAP-Rule" id="MF_01395"/>
    </source>
</evidence>
<evidence type="ECO:0000255" key="2">
    <source>
        <dbReference type="PROSITE-ProRule" id="PRU01136"/>
    </source>
</evidence>